<protein>
    <recommendedName>
        <fullName evidence="1">Glutamate-1-semialdehyde 2,1-aminomutase</fullName>
        <shortName evidence="1">GSA</shortName>
        <ecNumber evidence="1">5.4.3.8</ecNumber>
    </recommendedName>
    <alternativeName>
        <fullName evidence="1">Glutamate-1-semialdehyde aminotransferase</fullName>
        <shortName evidence="1">GSA-AT</shortName>
    </alternativeName>
</protein>
<feature type="chain" id="PRO_0000120463" description="Glutamate-1-semialdehyde 2,1-aminomutase">
    <location>
        <begin position="1"/>
        <end position="432"/>
    </location>
</feature>
<feature type="modified residue" description="N6-(pyridoxal phosphate)lysine" evidence="1">
    <location>
        <position position="265"/>
    </location>
</feature>
<keyword id="KW-0963">Cytoplasm</keyword>
<keyword id="KW-0413">Isomerase</keyword>
<keyword id="KW-0627">Porphyrin biosynthesis</keyword>
<keyword id="KW-0663">Pyridoxal phosphate</keyword>
<keyword id="KW-1185">Reference proteome</keyword>
<name>GSA_VIBCH</name>
<gene>
    <name evidence="1" type="primary">hemL</name>
    <name type="ordered locus">VC_0626</name>
</gene>
<accession>Q9KU97</accession>
<reference key="1">
    <citation type="journal article" date="2000" name="Nature">
        <title>DNA sequence of both chromosomes of the cholera pathogen Vibrio cholerae.</title>
        <authorList>
            <person name="Heidelberg J.F."/>
            <person name="Eisen J.A."/>
            <person name="Nelson W.C."/>
            <person name="Clayton R.A."/>
            <person name="Gwinn M.L."/>
            <person name="Dodson R.J."/>
            <person name="Haft D.H."/>
            <person name="Hickey E.K."/>
            <person name="Peterson J.D."/>
            <person name="Umayam L.A."/>
            <person name="Gill S.R."/>
            <person name="Nelson K.E."/>
            <person name="Read T.D."/>
            <person name="Tettelin H."/>
            <person name="Richardson D.L."/>
            <person name="Ermolaeva M.D."/>
            <person name="Vamathevan J.J."/>
            <person name="Bass S."/>
            <person name="Qin H."/>
            <person name="Dragoi I."/>
            <person name="Sellers P."/>
            <person name="McDonald L.A."/>
            <person name="Utterback T.R."/>
            <person name="Fleischmann R.D."/>
            <person name="Nierman W.C."/>
            <person name="White O."/>
            <person name="Salzberg S.L."/>
            <person name="Smith H.O."/>
            <person name="Colwell R.R."/>
            <person name="Mekalanos J.J."/>
            <person name="Venter J.C."/>
            <person name="Fraser C.M."/>
        </authorList>
    </citation>
    <scope>NUCLEOTIDE SEQUENCE [LARGE SCALE GENOMIC DNA]</scope>
    <source>
        <strain>ATCC 39315 / El Tor Inaba N16961</strain>
    </source>
</reference>
<evidence type="ECO:0000255" key="1">
    <source>
        <dbReference type="HAMAP-Rule" id="MF_00375"/>
    </source>
</evidence>
<sequence length="432" mass="46182">MTKSAELYQKAQTTIPGGVNSPVRAFNGVGGSPIFIDRADGALIFDADGKAYIDYVGSWGPMILGHNHAVIREAVIQAAQRGLSFGAPTEMEITMAELVSELVPSMEQLRMVNSGTEATMSAIRLARGYTGRDKIIKFEGCYHGHADSLLVKAGSGALTLGQPSSPGVPADFAKHTLTARFNDLDSVRELFAANQGEIACIIVEPVAGNMNCIPPVEGFHEGLREICDQEGALLIFDEVMTGFRVALGGAQAHYNIKPDLTTLGKVIGGGMPVGAFGGRREVMQYIAPTGPVYQAGTLSGNPIAMAAGYACLNLLREEGNEKRLAAKTKQLADGFKSLADQHGIPLLVHQVGGMFGFFFTEQETVTCYEDVARCDVERFKRFFHLMLQHGVYLAPSAFEASFTSLAHGSKEIEATLEAADRSFAILAAEAKA</sequence>
<organism>
    <name type="scientific">Vibrio cholerae serotype O1 (strain ATCC 39315 / El Tor Inaba N16961)</name>
    <dbReference type="NCBI Taxonomy" id="243277"/>
    <lineage>
        <taxon>Bacteria</taxon>
        <taxon>Pseudomonadati</taxon>
        <taxon>Pseudomonadota</taxon>
        <taxon>Gammaproteobacteria</taxon>
        <taxon>Vibrionales</taxon>
        <taxon>Vibrionaceae</taxon>
        <taxon>Vibrio</taxon>
    </lineage>
</organism>
<comment type="catalytic activity">
    <reaction evidence="1">
        <text>(S)-4-amino-5-oxopentanoate = 5-aminolevulinate</text>
        <dbReference type="Rhea" id="RHEA:14265"/>
        <dbReference type="ChEBI" id="CHEBI:57501"/>
        <dbReference type="ChEBI" id="CHEBI:356416"/>
        <dbReference type="EC" id="5.4.3.8"/>
    </reaction>
</comment>
<comment type="cofactor">
    <cofactor evidence="1">
        <name>pyridoxal 5'-phosphate</name>
        <dbReference type="ChEBI" id="CHEBI:597326"/>
    </cofactor>
</comment>
<comment type="pathway">
    <text evidence="1">Porphyrin-containing compound metabolism; protoporphyrin-IX biosynthesis; 5-aminolevulinate from L-glutamyl-tRNA(Glu): step 2/2.</text>
</comment>
<comment type="subunit">
    <text evidence="1">Homodimer.</text>
</comment>
<comment type="subcellular location">
    <subcellularLocation>
        <location evidence="1">Cytoplasm</location>
    </subcellularLocation>
</comment>
<comment type="similarity">
    <text evidence="1">Belongs to the class-III pyridoxal-phosphate-dependent aminotransferase family. HemL subfamily.</text>
</comment>
<dbReference type="EC" id="5.4.3.8" evidence="1"/>
<dbReference type="EMBL" id="AE003852">
    <property type="protein sequence ID" value="AAF93792.1"/>
    <property type="molecule type" value="Genomic_DNA"/>
</dbReference>
<dbReference type="PIR" id="E82300">
    <property type="entry name" value="E82300"/>
</dbReference>
<dbReference type="RefSeq" id="NP_230275.1">
    <property type="nucleotide sequence ID" value="NC_002505.1"/>
</dbReference>
<dbReference type="RefSeq" id="WP_000167257.1">
    <property type="nucleotide sequence ID" value="NZ_LT906614.1"/>
</dbReference>
<dbReference type="SMR" id="Q9KU97"/>
<dbReference type="STRING" id="243277.VC_0626"/>
<dbReference type="DNASU" id="2615414"/>
<dbReference type="EnsemblBacteria" id="AAF93792">
    <property type="protein sequence ID" value="AAF93792"/>
    <property type="gene ID" value="VC_0626"/>
</dbReference>
<dbReference type="GeneID" id="89515223"/>
<dbReference type="KEGG" id="vch:VC_0626"/>
<dbReference type="PATRIC" id="fig|243277.26.peg.595"/>
<dbReference type="eggNOG" id="COG0001">
    <property type="taxonomic scope" value="Bacteria"/>
</dbReference>
<dbReference type="HOGENOM" id="CLU_016922_1_5_6"/>
<dbReference type="UniPathway" id="UPA00251">
    <property type="reaction ID" value="UER00317"/>
</dbReference>
<dbReference type="Proteomes" id="UP000000584">
    <property type="component" value="Chromosome 1"/>
</dbReference>
<dbReference type="GO" id="GO:0005737">
    <property type="term" value="C:cytoplasm"/>
    <property type="evidence" value="ECO:0007669"/>
    <property type="project" value="UniProtKB-SubCell"/>
</dbReference>
<dbReference type="GO" id="GO:0042286">
    <property type="term" value="F:glutamate-1-semialdehyde 2,1-aminomutase activity"/>
    <property type="evidence" value="ECO:0007669"/>
    <property type="project" value="UniProtKB-UniRule"/>
</dbReference>
<dbReference type="GO" id="GO:0030170">
    <property type="term" value="F:pyridoxal phosphate binding"/>
    <property type="evidence" value="ECO:0007669"/>
    <property type="project" value="InterPro"/>
</dbReference>
<dbReference type="GO" id="GO:0008483">
    <property type="term" value="F:transaminase activity"/>
    <property type="evidence" value="ECO:0007669"/>
    <property type="project" value="InterPro"/>
</dbReference>
<dbReference type="GO" id="GO:0006782">
    <property type="term" value="P:protoporphyrinogen IX biosynthetic process"/>
    <property type="evidence" value="ECO:0007669"/>
    <property type="project" value="UniProtKB-UniRule"/>
</dbReference>
<dbReference type="CDD" id="cd00610">
    <property type="entry name" value="OAT_like"/>
    <property type="match status" value="1"/>
</dbReference>
<dbReference type="FunFam" id="3.40.640.10:FF:000021">
    <property type="entry name" value="Glutamate-1-semialdehyde 2,1-aminomutase"/>
    <property type="match status" value="1"/>
</dbReference>
<dbReference type="FunFam" id="3.90.1150.10:FF:000012">
    <property type="entry name" value="Glutamate-1-semialdehyde 2,1-aminomutase"/>
    <property type="match status" value="1"/>
</dbReference>
<dbReference type="Gene3D" id="3.90.1150.10">
    <property type="entry name" value="Aspartate Aminotransferase, domain 1"/>
    <property type="match status" value="1"/>
</dbReference>
<dbReference type="Gene3D" id="3.40.640.10">
    <property type="entry name" value="Type I PLP-dependent aspartate aminotransferase-like (Major domain)"/>
    <property type="match status" value="1"/>
</dbReference>
<dbReference type="HAMAP" id="MF_00375">
    <property type="entry name" value="HemL_aminotrans_3"/>
    <property type="match status" value="1"/>
</dbReference>
<dbReference type="InterPro" id="IPR004639">
    <property type="entry name" value="4pyrrol_synth_GluAld_NH2Trfase"/>
</dbReference>
<dbReference type="InterPro" id="IPR005814">
    <property type="entry name" value="Aminotrans_3"/>
</dbReference>
<dbReference type="InterPro" id="IPR049704">
    <property type="entry name" value="Aminotrans_3_PPA_site"/>
</dbReference>
<dbReference type="InterPro" id="IPR015424">
    <property type="entry name" value="PyrdxlP-dep_Trfase"/>
</dbReference>
<dbReference type="InterPro" id="IPR015421">
    <property type="entry name" value="PyrdxlP-dep_Trfase_major"/>
</dbReference>
<dbReference type="InterPro" id="IPR015422">
    <property type="entry name" value="PyrdxlP-dep_Trfase_small"/>
</dbReference>
<dbReference type="NCBIfam" id="TIGR00713">
    <property type="entry name" value="hemL"/>
    <property type="match status" value="1"/>
</dbReference>
<dbReference type="NCBIfam" id="NF000818">
    <property type="entry name" value="PRK00062.1"/>
    <property type="match status" value="1"/>
</dbReference>
<dbReference type="PANTHER" id="PTHR43713">
    <property type="entry name" value="GLUTAMATE-1-SEMIALDEHYDE 2,1-AMINOMUTASE"/>
    <property type="match status" value="1"/>
</dbReference>
<dbReference type="PANTHER" id="PTHR43713:SF3">
    <property type="entry name" value="GLUTAMATE-1-SEMIALDEHYDE 2,1-AMINOMUTASE 1, CHLOROPLASTIC-RELATED"/>
    <property type="match status" value="1"/>
</dbReference>
<dbReference type="Pfam" id="PF00202">
    <property type="entry name" value="Aminotran_3"/>
    <property type="match status" value="1"/>
</dbReference>
<dbReference type="SUPFAM" id="SSF53383">
    <property type="entry name" value="PLP-dependent transferases"/>
    <property type="match status" value="1"/>
</dbReference>
<dbReference type="PROSITE" id="PS00600">
    <property type="entry name" value="AA_TRANSFER_CLASS_3"/>
    <property type="match status" value="1"/>
</dbReference>
<proteinExistence type="inferred from homology"/>